<name>NU2C2_AGRST</name>
<reference key="1">
    <citation type="journal article" date="2007" name="Theor. Appl. Genet.">
        <title>Complete chloroplast genome sequences of Hordeum vulgare, Sorghum bicolor and Agrostis stolonifera, and comparative analyses with other grass genomes.</title>
        <authorList>
            <person name="Saski C."/>
            <person name="Lee S.-B."/>
            <person name="Fjellheim S."/>
            <person name="Guda C."/>
            <person name="Jansen R.K."/>
            <person name="Luo H."/>
            <person name="Tomkins J."/>
            <person name="Rognli O.A."/>
            <person name="Daniell H."/>
            <person name="Clarke J.L."/>
        </authorList>
    </citation>
    <scope>NUCLEOTIDE SEQUENCE [LARGE SCALE GENOMIC DNA]</scope>
    <source>
        <strain>cv. Penn A-4</strain>
    </source>
</reference>
<keyword id="KW-0150">Chloroplast</keyword>
<keyword id="KW-0472">Membrane</keyword>
<keyword id="KW-0520">NAD</keyword>
<keyword id="KW-0521">NADP</keyword>
<keyword id="KW-0934">Plastid</keyword>
<keyword id="KW-0618">Plastoquinone</keyword>
<keyword id="KW-0874">Quinone</keyword>
<keyword id="KW-0793">Thylakoid</keyword>
<keyword id="KW-1278">Translocase</keyword>
<keyword id="KW-0812">Transmembrane</keyword>
<keyword id="KW-1133">Transmembrane helix</keyword>
<keyword id="KW-0813">Transport</keyword>
<dbReference type="EC" id="7.1.1.-" evidence="1"/>
<dbReference type="EMBL" id="EF115543">
    <property type="protein sequence ID" value="ABK79641.1"/>
    <property type="molecule type" value="Genomic_DNA"/>
</dbReference>
<dbReference type="SMR" id="P0CC24"/>
<dbReference type="GO" id="GO:0009535">
    <property type="term" value="C:chloroplast thylakoid membrane"/>
    <property type="evidence" value="ECO:0007669"/>
    <property type="project" value="UniProtKB-SubCell"/>
</dbReference>
<dbReference type="GO" id="GO:0008137">
    <property type="term" value="F:NADH dehydrogenase (ubiquinone) activity"/>
    <property type="evidence" value="ECO:0007669"/>
    <property type="project" value="InterPro"/>
</dbReference>
<dbReference type="GO" id="GO:0048038">
    <property type="term" value="F:quinone binding"/>
    <property type="evidence" value="ECO:0007669"/>
    <property type="project" value="UniProtKB-KW"/>
</dbReference>
<dbReference type="GO" id="GO:0042773">
    <property type="term" value="P:ATP synthesis coupled electron transport"/>
    <property type="evidence" value="ECO:0007669"/>
    <property type="project" value="InterPro"/>
</dbReference>
<dbReference type="GO" id="GO:0019684">
    <property type="term" value="P:photosynthesis, light reaction"/>
    <property type="evidence" value="ECO:0007669"/>
    <property type="project" value="UniProtKB-UniRule"/>
</dbReference>
<dbReference type="HAMAP" id="MF_00445">
    <property type="entry name" value="NDH1_NuoN_1"/>
    <property type="match status" value="1"/>
</dbReference>
<dbReference type="InterPro" id="IPR010096">
    <property type="entry name" value="NADH-Q_OxRdtase_suN/2"/>
</dbReference>
<dbReference type="InterPro" id="IPR001750">
    <property type="entry name" value="ND/Mrp_TM"/>
</dbReference>
<dbReference type="InterPro" id="IPR045693">
    <property type="entry name" value="Ndh2_N"/>
</dbReference>
<dbReference type="NCBIfam" id="TIGR01770">
    <property type="entry name" value="NDH_I_N"/>
    <property type="match status" value="1"/>
</dbReference>
<dbReference type="NCBIfam" id="NF002701">
    <property type="entry name" value="PRK02504.1"/>
    <property type="match status" value="1"/>
</dbReference>
<dbReference type="PANTHER" id="PTHR22773">
    <property type="entry name" value="NADH DEHYDROGENASE"/>
    <property type="match status" value="1"/>
</dbReference>
<dbReference type="Pfam" id="PF19530">
    <property type="entry name" value="Ndh2_N"/>
    <property type="match status" value="1"/>
</dbReference>
<dbReference type="Pfam" id="PF00361">
    <property type="entry name" value="Proton_antipo_M"/>
    <property type="match status" value="1"/>
</dbReference>
<dbReference type="PRINTS" id="PR01434">
    <property type="entry name" value="NADHDHGNASE5"/>
</dbReference>
<sequence length="510" mass="56663">MIWHVQNENFILDSTRIFMKAFHLLLFQGSSIFPECILIFGLILLLMIDSTSDQKDRPWFYFISSTSLVISITALLFRWREEPIISFSGNFQTNNFNEIFQFLILLCSTLCIPLSVEYIECTEMAITEFLLFVLTATLGGMFLCGANDLITIFVAPECFSLCSYLLSGYTKRDLRSNEATMKYLLMGGASSSILVHGFSWLYGSSGGEIELQEIVNGLINTQMYNSPGISIALISITVGLGFKLSPAPFHQWTPDVYEGSPTPVVAFLSVTSKVAASASATRILDIPFYFSSNEWHLLLEILAILSMILGNLLAITQTSMKRMLAYSSIGQIGYVIIGIIVGDSNDGYASMITYMLFYISMNLGTFACIVLFGLRTGTDNIRDYAGLYTKDPFLALSLALCLLSLGGLPPLAGFFGKLYLFWCGWQAGLYLLVSIGLLTSVLSIYYYLKIIKLLMTGRNQEITPYVRNYRRSPLRSNNSIELSMTVCVIASTIPGISMNPILAIAQDTLF</sequence>
<geneLocation type="chloroplast"/>
<evidence type="ECO:0000255" key="1">
    <source>
        <dbReference type="HAMAP-Rule" id="MF_00445"/>
    </source>
</evidence>
<protein>
    <recommendedName>
        <fullName evidence="1">NAD(P)H-quinone oxidoreductase subunit 2 B, chloroplastic</fullName>
        <ecNumber evidence="1">7.1.1.-</ecNumber>
    </recommendedName>
    <alternativeName>
        <fullName evidence="1">NAD(P)H dehydrogenase, subunit 2 B</fullName>
    </alternativeName>
    <alternativeName>
        <fullName evidence="1">NADH-plastoquinone oxidoreductase subunit 2 B</fullName>
    </alternativeName>
</protein>
<feature type="chain" id="PRO_0000391250" description="NAD(P)H-quinone oxidoreductase subunit 2 B, chloroplastic">
    <location>
        <begin position="1"/>
        <end position="510"/>
    </location>
</feature>
<feature type="transmembrane region" description="Helical" evidence="1">
    <location>
        <begin position="24"/>
        <end position="44"/>
    </location>
</feature>
<feature type="transmembrane region" description="Helical" evidence="1">
    <location>
        <begin position="59"/>
        <end position="79"/>
    </location>
</feature>
<feature type="transmembrane region" description="Helical" evidence="1">
    <location>
        <begin position="99"/>
        <end position="119"/>
    </location>
</feature>
<feature type="transmembrane region" description="Helical" evidence="1">
    <location>
        <begin position="124"/>
        <end position="144"/>
    </location>
</feature>
<feature type="transmembrane region" description="Helical" evidence="1">
    <location>
        <begin position="149"/>
        <end position="169"/>
    </location>
</feature>
<feature type="transmembrane region" description="Helical" evidence="1">
    <location>
        <begin position="183"/>
        <end position="203"/>
    </location>
</feature>
<feature type="transmembrane region" description="Helical" evidence="1">
    <location>
        <begin position="229"/>
        <end position="249"/>
    </location>
</feature>
<feature type="transmembrane region" description="Helical" evidence="1">
    <location>
        <begin position="295"/>
        <end position="315"/>
    </location>
</feature>
<feature type="transmembrane region" description="Helical" evidence="1">
    <location>
        <begin position="323"/>
        <end position="343"/>
    </location>
</feature>
<feature type="transmembrane region" description="Helical" evidence="1">
    <location>
        <begin position="354"/>
        <end position="374"/>
    </location>
</feature>
<feature type="transmembrane region" description="Helical" evidence="1">
    <location>
        <begin position="395"/>
        <end position="415"/>
    </location>
</feature>
<feature type="transmembrane region" description="Helical" evidence="1">
    <location>
        <begin position="418"/>
        <end position="438"/>
    </location>
</feature>
<gene>
    <name evidence="1" type="primary">ndhB2</name>
</gene>
<comment type="function">
    <text evidence="1">NDH shuttles electrons from NAD(P)H:plastoquinone, via FMN and iron-sulfur (Fe-S) centers, to quinones in the photosynthetic chain and possibly in a chloroplast respiratory chain. The immediate electron acceptor for the enzyme in this species is believed to be plastoquinone. Couples the redox reaction to proton translocation, and thus conserves the redox energy in a proton gradient.</text>
</comment>
<comment type="catalytic activity">
    <reaction evidence="1">
        <text>a plastoquinone + NADH + (n+1) H(+)(in) = a plastoquinol + NAD(+) + n H(+)(out)</text>
        <dbReference type="Rhea" id="RHEA:42608"/>
        <dbReference type="Rhea" id="RHEA-COMP:9561"/>
        <dbReference type="Rhea" id="RHEA-COMP:9562"/>
        <dbReference type="ChEBI" id="CHEBI:15378"/>
        <dbReference type="ChEBI" id="CHEBI:17757"/>
        <dbReference type="ChEBI" id="CHEBI:57540"/>
        <dbReference type="ChEBI" id="CHEBI:57945"/>
        <dbReference type="ChEBI" id="CHEBI:62192"/>
    </reaction>
</comment>
<comment type="catalytic activity">
    <reaction evidence="1">
        <text>a plastoquinone + NADPH + (n+1) H(+)(in) = a plastoquinol + NADP(+) + n H(+)(out)</text>
        <dbReference type="Rhea" id="RHEA:42612"/>
        <dbReference type="Rhea" id="RHEA-COMP:9561"/>
        <dbReference type="Rhea" id="RHEA-COMP:9562"/>
        <dbReference type="ChEBI" id="CHEBI:15378"/>
        <dbReference type="ChEBI" id="CHEBI:17757"/>
        <dbReference type="ChEBI" id="CHEBI:57783"/>
        <dbReference type="ChEBI" id="CHEBI:58349"/>
        <dbReference type="ChEBI" id="CHEBI:62192"/>
    </reaction>
</comment>
<comment type="subunit">
    <text evidence="1">NDH is composed of at least 16 different subunits, 5 of which are encoded in the nucleus.</text>
</comment>
<comment type="subcellular location">
    <subcellularLocation>
        <location evidence="1">Plastid</location>
        <location evidence="1">Chloroplast thylakoid membrane</location>
        <topology evidence="1">Multi-pass membrane protein</topology>
    </subcellularLocation>
</comment>
<comment type="similarity">
    <text evidence="1">Belongs to the complex I subunit 2 family.</text>
</comment>
<organism>
    <name type="scientific">Agrostis stolonifera</name>
    <name type="common">Creeping bentgrass</name>
    <dbReference type="NCBI Taxonomy" id="63632"/>
    <lineage>
        <taxon>Eukaryota</taxon>
        <taxon>Viridiplantae</taxon>
        <taxon>Streptophyta</taxon>
        <taxon>Embryophyta</taxon>
        <taxon>Tracheophyta</taxon>
        <taxon>Spermatophyta</taxon>
        <taxon>Magnoliopsida</taxon>
        <taxon>Liliopsida</taxon>
        <taxon>Poales</taxon>
        <taxon>Poaceae</taxon>
        <taxon>BOP clade</taxon>
        <taxon>Pooideae</taxon>
        <taxon>Poodae</taxon>
        <taxon>Poeae</taxon>
        <taxon>Poeae Chloroplast Group 1 (Aveneae type)</taxon>
        <taxon>Agrostidodinae</taxon>
        <taxon>Agrostidinae</taxon>
        <taxon>Agrostis</taxon>
    </lineage>
</organism>
<accession>P0CC24</accession>
<accession>A1EA52</accession>
<proteinExistence type="inferred from homology"/>